<dbReference type="EMBL" id="AB078135">
    <property type="protein sequence ID" value="BAC54887.1"/>
    <property type="molecule type" value="Genomic_DNA"/>
</dbReference>
<dbReference type="GO" id="GO:0009507">
    <property type="term" value="C:chloroplast"/>
    <property type="evidence" value="ECO:0007669"/>
    <property type="project" value="UniProtKB-SubCell"/>
</dbReference>
<dbReference type="GO" id="GO:0003723">
    <property type="term" value="F:RNA binding"/>
    <property type="evidence" value="ECO:0007669"/>
    <property type="project" value="UniProtKB-KW"/>
</dbReference>
<dbReference type="GO" id="GO:0006397">
    <property type="term" value="P:mRNA processing"/>
    <property type="evidence" value="ECO:0007669"/>
    <property type="project" value="UniProtKB-KW"/>
</dbReference>
<dbReference type="GO" id="GO:0008380">
    <property type="term" value="P:RNA splicing"/>
    <property type="evidence" value="ECO:0007669"/>
    <property type="project" value="UniProtKB-UniRule"/>
</dbReference>
<dbReference type="GO" id="GO:0008033">
    <property type="term" value="P:tRNA processing"/>
    <property type="evidence" value="ECO:0007669"/>
    <property type="project" value="UniProtKB-KW"/>
</dbReference>
<dbReference type="HAMAP" id="MF_01390">
    <property type="entry name" value="MatK"/>
    <property type="match status" value="1"/>
</dbReference>
<dbReference type="InterPro" id="IPR024937">
    <property type="entry name" value="Domain_X"/>
</dbReference>
<dbReference type="InterPro" id="IPR002866">
    <property type="entry name" value="Maturase_MatK"/>
</dbReference>
<dbReference type="InterPro" id="IPR024942">
    <property type="entry name" value="Maturase_MatK_N"/>
</dbReference>
<dbReference type="PANTHER" id="PTHR34811">
    <property type="entry name" value="MATURASE K"/>
    <property type="match status" value="1"/>
</dbReference>
<dbReference type="PANTHER" id="PTHR34811:SF1">
    <property type="entry name" value="MATURASE K"/>
    <property type="match status" value="1"/>
</dbReference>
<dbReference type="Pfam" id="PF01348">
    <property type="entry name" value="Intron_maturas2"/>
    <property type="match status" value="1"/>
</dbReference>
<dbReference type="Pfam" id="PF01824">
    <property type="entry name" value="MatK_N"/>
    <property type="match status" value="1"/>
</dbReference>
<sequence>MEKFEGYSEKHKSRQQYFVYPLLFQEYIYAFAHDYGLNGSEPVEIVSCNNKKFSSLLVKRLIIRMYQQNFLDNSVNHPNQDRLLDYKNYFYSEFYSQILSEGFAIVVEIPFSLRELSCPKEKEIPKFQNLRSIHSIFPFLEDKFLHLDYLSHIEIPYPIHLEILVQLLQYRIQDVPSLHLLRFFLNYYSNWNSFITSMKSILFLQKENKRLVKFLYNSYVSEYEFFLLFLRKQSSCLPLASSGTFLERIHFSRKMEHFGIMYPGFSRKTLWFFMDPLMHYVRYQGKAILASKGSFFLKKKWKCYLINFWQYYFFFWTQPRRIHINQLANSCFDFMGYLSSVPKSPLLVRNQMLENSFLIDTRMKKFDTIVPATLLIGYLSKAQFCTGSGHPISKPIWTDLSDWDILDRFGRICRNLFHYHSGSSKKRTLYRLKYILRLSCARTLARKHKSTVRTFMQRLGSAFLEEFFTEEEQVFSLMFTKTTLFSFCGSHTERIWYLDIIRINDLVNPLN</sequence>
<accession>Q85ZS9</accession>
<comment type="function">
    <text evidence="1">Usually encoded in the trnK tRNA gene intron. Probably assists in splicing its own and other chloroplast group II introns.</text>
</comment>
<comment type="subcellular location">
    <subcellularLocation>
        <location>Plastid</location>
        <location>Chloroplast</location>
    </subcellularLocation>
</comment>
<comment type="similarity">
    <text evidence="1">Belongs to the intron maturase 2 family. MatK subfamily.</text>
</comment>
<gene>
    <name evidence="1" type="primary">matK</name>
</gene>
<evidence type="ECO:0000255" key="1">
    <source>
        <dbReference type="HAMAP-Rule" id="MF_01390"/>
    </source>
</evidence>
<proteinExistence type="inferred from homology"/>
<geneLocation type="chloroplast"/>
<reference key="1">
    <citation type="journal article" date="2002" name="Genome">
        <title>Molecular phylogeny of the genus Hordeum using three chloroplast DNA sequences.</title>
        <authorList>
            <person name="Nishikawa T."/>
            <person name="Salomon B."/>
            <person name="Komatsuda T."/>
            <person name="von Bothmer R."/>
            <person name="Kadowaki K."/>
        </authorList>
    </citation>
    <scope>NUCLEOTIDE SEQUENCE [GENOMIC DNA]</scope>
    <source>
        <strain>H0296</strain>
    </source>
</reference>
<feature type="chain" id="PRO_0000143423" description="Maturase K">
    <location>
        <begin position="1"/>
        <end position="511"/>
    </location>
</feature>
<name>MATK_HORSA</name>
<protein>
    <recommendedName>
        <fullName evidence="1">Maturase K</fullName>
    </recommendedName>
    <alternativeName>
        <fullName evidence="1">Intron maturase</fullName>
    </alternativeName>
</protein>
<keyword id="KW-0150">Chloroplast</keyword>
<keyword id="KW-0507">mRNA processing</keyword>
<keyword id="KW-0934">Plastid</keyword>
<keyword id="KW-0694">RNA-binding</keyword>
<keyword id="KW-0819">tRNA processing</keyword>
<organism>
    <name type="scientific">Hordeum secalinum</name>
    <name type="common">Meadow barley</name>
    <dbReference type="NCBI Taxonomy" id="118676"/>
    <lineage>
        <taxon>Eukaryota</taxon>
        <taxon>Viridiplantae</taxon>
        <taxon>Streptophyta</taxon>
        <taxon>Embryophyta</taxon>
        <taxon>Tracheophyta</taxon>
        <taxon>Spermatophyta</taxon>
        <taxon>Magnoliopsida</taxon>
        <taxon>Liliopsida</taxon>
        <taxon>Poales</taxon>
        <taxon>Poaceae</taxon>
        <taxon>BOP clade</taxon>
        <taxon>Pooideae</taxon>
        <taxon>Triticodae</taxon>
        <taxon>Triticeae</taxon>
        <taxon>Hordeinae</taxon>
        <taxon>Hordeum</taxon>
    </lineage>
</organism>